<evidence type="ECO:0000255" key="1">
    <source>
        <dbReference type="HAMAP-Rule" id="MF_00815"/>
    </source>
</evidence>
<sequence>MAGAKEIKTKIASVKNTQKITSAMEMVAASKMRRAQERMAASRPYAESMRKVIGHVAQGSLEYKHPYLEVREAKRVGYIVVATDRGLCGGLNVNLFKKVVSDVKSWKEQGAEFEFCPIGARSVQFFKSFGGQVSAHASGLGDAPKLADLIGTVRVMLDAYNEGKLDRLYVVFNKFVNTMTQTPVIEQLLPLPKSEDDEVAHRWDYIYEPDPKALLDTLLVRYVESQVYQGVVENIASEQAARMVAMKAATDNAGTLIDDLQLVYNKARQAAITQELSEIVSGASAV</sequence>
<comment type="function">
    <text evidence="1">Produces ATP from ADP in the presence of a proton gradient across the membrane. The gamma chain is believed to be important in regulating ATPase activity and the flow of protons through the CF(0) complex.</text>
</comment>
<comment type="subunit">
    <text evidence="1">F-type ATPases have 2 components, CF(1) - the catalytic core - and CF(0) - the membrane proton channel. CF(1) has five subunits: alpha(3), beta(3), gamma(1), delta(1), epsilon(1). CF(0) has three main subunits: a, b and c.</text>
</comment>
<comment type="subcellular location">
    <subcellularLocation>
        <location evidence="1">Cell inner membrane</location>
        <topology evidence="1">Peripheral membrane protein</topology>
    </subcellularLocation>
</comment>
<comment type="similarity">
    <text evidence="1">Belongs to the ATPase gamma chain family.</text>
</comment>
<organism>
    <name type="scientific">Shewanella sp. (strain ANA-3)</name>
    <dbReference type="NCBI Taxonomy" id="94122"/>
    <lineage>
        <taxon>Bacteria</taxon>
        <taxon>Pseudomonadati</taxon>
        <taxon>Pseudomonadota</taxon>
        <taxon>Gammaproteobacteria</taxon>
        <taxon>Alteromonadales</taxon>
        <taxon>Shewanellaceae</taxon>
        <taxon>Shewanella</taxon>
    </lineage>
</organism>
<accession>A0L2S9</accession>
<keyword id="KW-0066">ATP synthesis</keyword>
<keyword id="KW-0997">Cell inner membrane</keyword>
<keyword id="KW-1003">Cell membrane</keyword>
<keyword id="KW-0139">CF(1)</keyword>
<keyword id="KW-0375">Hydrogen ion transport</keyword>
<keyword id="KW-0406">Ion transport</keyword>
<keyword id="KW-0472">Membrane</keyword>
<keyword id="KW-0813">Transport</keyword>
<proteinExistence type="inferred from homology"/>
<protein>
    <recommendedName>
        <fullName evidence="1">ATP synthase gamma chain</fullName>
    </recommendedName>
    <alternativeName>
        <fullName evidence="1">ATP synthase F1 sector gamma subunit</fullName>
    </alternativeName>
    <alternativeName>
        <fullName evidence="1">F-ATPase gamma subunit</fullName>
    </alternativeName>
</protein>
<gene>
    <name evidence="1" type="primary">atpG</name>
    <name type="ordered locus">Shewana3_4131</name>
</gene>
<feature type="chain" id="PRO_1000053331" description="ATP synthase gamma chain">
    <location>
        <begin position="1"/>
        <end position="286"/>
    </location>
</feature>
<dbReference type="EMBL" id="CP000469">
    <property type="protein sequence ID" value="ABK50348.1"/>
    <property type="molecule type" value="Genomic_DNA"/>
</dbReference>
<dbReference type="RefSeq" id="WP_011718833.1">
    <property type="nucleotide sequence ID" value="NC_008577.1"/>
</dbReference>
<dbReference type="SMR" id="A0L2S9"/>
<dbReference type="STRING" id="94122.Shewana3_4131"/>
<dbReference type="GeneID" id="94725959"/>
<dbReference type="KEGG" id="shn:Shewana3_4131"/>
<dbReference type="eggNOG" id="COG0224">
    <property type="taxonomic scope" value="Bacteria"/>
</dbReference>
<dbReference type="HOGENOM" id="CLU_050669_0_1_6"/>
<dbReference type="OrthoDB" id="9812769at2"/>
<dbReference type="Proteomes" id="UP000002589">
    <property type="component" value="Chromosome"/>
</dbReference>
<dbReference type="GO" id="GO:0005886">
    <property type="term" value="C:plasma membrane"/>
    <property type="evidence" value="ECO:0007669"/>
    <property type="project" value="UniProtKB-SubCell"/>
</dbReference>
<dbReference type="GO" id="GO:0045259">
    <property type="term" value="C:proton-transporting ATP synthase complex"/>
    <property type="evidence" value="ECO:0007669"/>
    <property type="project" value="UniProtKB-KW"/>
</dbReference>
<dbReference type="GO" id="GO:0005524">
    <property type="term" value="F:ATP binding"/>
    <property type="evidence" value="ECO:0007669"/>
    <property type="project" value="UniProtKB-UniRule"/>
</dbReference>
<dbReference type="GO" id="GO:0046933">
    <property type="term" value="F:proton-transporting ATP synthase activity, rotational mechanism"/>
    <property type="evidence" value="ECO:0007669"/>
    <property type="project" value="UniProtKB-UniRule"/>
</dbReference>
<dbReference type="GO" id="GO:0042777">
    <property type="term" value="P:proton motive force-driven plasma membrane ATP synthesis"/>
    <property type="evidence" value="ECO:0007669"/>
    <property type="project" value="UniProtKB-UniRule"/>
</dbReference>
<dbReference type="CDD" id="cd12151">
    <property type="entry name" value="F1-ATPase_gamma"/>
    <property type="match status" value="1"/>
</dbReference>
<dbReference type="FunFam" id="1.10.287.80:FF:000005">
    <property type="entry name" value="ATP synthase gamma chain"/>
    <property type="match status" value="2"/>
</dbReference>
<dbReference type="FunFam" id="3.40.1380.10:FF:000001">
    <property type="entry name" value="ATP synthase gamma chain"/>
    <property type="match status" value="1"/>
</dbReference>
<dbReference type="Gene3D" id="3.40.1380.10">
    <property type="match status" value="1"/>
</dbReference>
<dbReference type="Gene3D" id="1.10.287.80">
    <property type="entry name" value="ATP synthase, gamma subunit, helix hairpin domain"/>
    <property type="match status" value="1"/>
</dbReference>
<dbReference type="HAMAP" id="MF_00815">
    <property type="entry name" value="ATP_synth_gamma_bact"/>
    <property type="match status" value="1"/>
</dbReference>
<dbReference type="InterPro" id="IPR035968">
    <property type="entry name" value="ATP_synth_F1_ATPase_gsu"/>
</dbReference>
<dbReference type="InterPro" id="IPR000131">
    <property type="entry name" value="ATP_synth_F1_gsu"/>
</dbReference>
<dbReference type="InterPro" id="IPR023632">
    <property type="entry name" value="ATP_synth_F1_gsu_CS"/>
</dbReference>
<dbReference type="NCBIfam" id="TIGR01146">
    <property type="entry name" value="ATPsyn_F1gamma"/>
    <property type="match status" value="1"/>
</dbReference>
<dbReference type="NCBIfam" id="NF004144">
    <property type="entry name" value="PRK05621.1-1"/>
    <property type="match status" value="1"/>
</dbReference>
<dbReference type="PANTHER" id="PTHR11693">
    <property type="entry name" value="ATP SYNTHASE GAMMA CHAIN"/>
    <property type="match status" value="1"/>
</dbReference>
<dbReference type="PANTHER" id="PTHR11693:SF22">
    <property type="entry name" value="ATP SYNTHASE SUBUNIT GAMMA, MITOCHONDRIAL"/>
    <property type="match status" value="1"/>
</dbReference>
<dbReference type="Pfam" id="PF00231">
    <property type="entry name" value="ATP-synt"/>
    <property type="match status" value="1"/>
</dbReference>
<dbReference type="PRINTS" id="PR00126">
    <property type="entry name" value="ATPASEGAMMA"/>
</dbReference>
<dbReference type="SUPFAM" id="SSF52943">
    <property type="entry name" value="ATP synthase (F1-ATPase), gamma subunit"/>
    <property type="match status" value="1"/>
</dbReference>
<dbReference type="PROSITE" id="PS00153">
    <property type="entry name" value="ATPASE_GAMMA"/>
    <property type="match status" value="1"/>
</dbReference>
<name>ATPG_SHESA</name>
<reference key="1">
    <citation type="submission" date="2006-09" db="EMBL/GenBank/DDBJ databases">
        <title>Complete sequence of chromosome 1 of Shewanella sp. ANA-3.</title>
        <authorList>
            <person name="Copeland A."/>
            <person name="Lucas S."/>
            <person name="Lapidus A."/>
            <person name="Barry K."/>
            <person name="Detter J.C."/>
            <person name="Glavina del Rio T."/>
            <person name="Hammon N."/>
            <person name="Israni S."/>
            <person name="Dalin E."/>
            <person name="Tice H."/>
            <person name="Pitluck S."/>
            <person name="Chertkov O."/>
            <person name="Brettin T."/>
            <person name="Bruce D."/>
            <person name="Han C."/>
            <person name="Tapia R."/>
            <person name="Gilna P."/>
            <person name="Schmutz J."/>
            <person name="Larimer F."/>
            <person name="Land M."/>
            <person name="Hauser L."/>
            <person name="Kyrpides N."/>
            <person name="Kim E."/>
            <person name="Newman D."/>
            <person name="Salticov C."/>
            <person name="Konstantinidis K."/>
            <person name="Klappenback J."/>
            <person name="Tiedje J."/>
            <person name="Richardson P."/>
        </authorList>
    </citation>
    <scope>NUCLEOTIDE SEQUENCE [LARGE SCALE GENOMIC DNA]</scope>
    <source>
        <strain>ANA-3</strain>
    </source>
</reference>